<organism>
    <name type="scientific">Mycobacterium ulcerans (strain Agy99)</name>
    <dbReference type="NCBI Taxonomy" id="362242"/>
    <lineage>
        <taxon>Bacteria</taxon>
        <taxon>Bacillati</taxon>
        <taxon>Actinomycetota</taxon>
        <taxon>Actinomycetes</taxon>
        <taxon>Mycobacteriales</taxon>
        <taxon>Mycobacteriaceae</taxon>
        <taxon>Mycobacterium</taxon>
        <taxon>Mycobacterium ulcerans group</taxon>
    </lineage>
</organism>
<protein>
    <recommendedName>
        <fullName evidence="1">2,3-bisphosphoglycerate-dependent phosphoglycerate mutase</fullName>
        <shortName evidence="1">BPG-dependent PGAM</shortName>
        <shortName evidence="1">PGAM</shortName>
        <shortName evidence="1">Phosphoglyceromutase</shortName>
        <shortName evidence="1">dPGM</shortName>
        <ecNumber evidence="1">5.4.2.11</ecNumber>
    </recommendedName>
</protein>
<gene>
    <name evidence="1" type="primary">gpmA</name>
    <name type="ordered locus">MUL_4558</name>
</gene>
<evidence type="ECO:0000255" key="1">
    <source>
        <dbReference type="HAMAP-Rule" id="MF_01039"/>
    </source>
</evidence>
<sequence>MGDTGTLVLLRHGESDWNARNLFTGWVDVGLTEKGRAEAVRSGELLAEQDLLPDVLYTSLLRRAITTAHLALDSADRLWIPVRRSWRLNERHYGALQGLDKAETKARYGEEQFMAWRRSYDTPPPLIEKGSEFSQDADPRYANIDGGPLTECLADVVARFLPYFTDVIVGDLRAGKTVLIVAHGNSLRALVKHLDQMSDEDIVGLNIPTGIPLRYDLDERLQPVVPGGTYLDPEAAAAGAAAVASQGAAKA</sequence>
<accession>A0PVZ3</accession>
<proteinExistence type="inferred from homology"/>
<name>GPMA_MYCUA</name>
<comment type="function">
    <text evidence="1">Catalyzes the interconversion of 2-phosphoglycerate and 3-phosphoglycerate.</text>
</comment>
<comment type="catalytic activity">
    <reaction evidence="1">
        <text>(2R)-2-phosphoglycerate = (2R)-3-phosphoglycerate</text>
        <dbReference type="Rhea" id="RHEA:15901"/>
        <dbReference type="ChEBI" id="CHEBI:58272"/>
        <dbReference type="ChEBI" id="CHEBI:58289"/>
        <dbReference type="EC" id="5.4.2.11"/>
    </reaction>
</comment>
<comment type="pathway">
    <text evidence="1">Carbohydrate degradation; glycolysis; pyruvate from D-glyceraldehyde 3-phosphate: step 3/5.</text>
</comment>
<comment type="similarity">
    <text evidence="1">Belongs to the phosphoglycerate mutase family. BPG-dependent PGAM subfamily.</text>
</comment>
<reference key="1">
    <citation type="journal article" date="2007" name="Genome Res.">
        <title>Reductive evolution and niche adaptation inferred from the genome of Mycobacterium ulcerans, the causative agent of Buruli ulcer.</title>
        <authorList>
            <person name="Stinear T.P."/>
            <person name="Seemann T."/>
            <person name="Pidot S."/>
            <person name="Frigui W."/>
            <person name="Reysset G."/>
            <person name="Garnier T."/>
            <person name="Meurice G."/>
            <person name="Simon D."/>
            <person name="Bouchier C."/>
            <person name="Ma L."/>
            <person name="Tichit M."/>
            <person name="Porter J.L."/>
            <person name="Ryan J."/>
            <person name="Johnson P.D.R."/>
            <person name="Davies J.K."/>
            <person name="Jenkin G.A."/>
            <person name="Small P.L.C."/>
            <person name="Jones L.M."/>
            <person name="Tekaia F."/>
            <person name="Laval F."/>
            <person name="Daffe M."/>
            <person name="Parkhill J."/>
            <person name="Cole S.T."/>
        </authorList>
    </citation>
    <scope>NUCLEOTIDE SEQUENCE [LARGE SCALE GENOMIC DNA]</scope>
    <source>
        <strain>Agy99</strain>
    </source>
</reference>
<dbReference type="EC" id="5.4.2.11" evidence="1"/>
<dbReference type="EMBL" id="CP000325">
    <property type="protein sequence ID" value="ABL06512.1"/>
    <property type="molecule type" value="Genomic_DNA"/>
</dbReference>
<dbReference type="RefSeq" id="WP_011742111.1">
    <property type="nucleotide sequence ID" value="NC_008611.1"/>
</dbReference>
<dbReference type="SMR" id="A0PVZ3"/>
<dbReference type="KEGG" id="mul:MUL_4558"/>
<dbReference type="eggNOG" id="COG0588">
    <property type="taxonomic scope" value="Bacteria"/>
</dbReference>
<dbReference type="HOGENOM" id="CLU_033323_1_1_11"/>
<dbReference type="UniPathway" id="UPA00109">
    <property type="reaction ID" value="UER00186"/>
</dbReference>
<dbReference type="Proteomes" id="UP000000765">
    <property type="component" value="Chromosome"/>
</dbReference>
<dbReference type="GO" id="GO:0004619">
    <property type="term" value="F:phosphoglycerate mutase activity"/>
    <property type="evidence" value="ECO:0007669"/>
    <property type="project" value="UniProtKB-EC"/>
</dbReference>
<dbReference type="GO" id="GO:0006094">
    <property type="term" value="P:gluconeogenesis"/>
    <property type="evidence" value="ECO:0007669"/>
    <property type="project" value="UniProtKB-UniRule"/>
</dbReference>
<dbReference type="GO" id="GO:0006096">
    <property type="term" value="P:glycolytic process"/>
    <property type="evidence" value="ECO:0007669"/>
    <property type="project" value="UniProtKB-UniRule"/>
</dbReference>
<dbReference type="CDD" id="cd07067">
    <property type="entry name" value="HP_PGM_like"/>
    <property type="match status" value="1"/>
</dbReference>
<dbReference type="FunFam" id="3.40.50.1240:FF:000012">
    <property type="entry name" value="Phosphoglycerate mutase 1"/>
    <property type="match status" value="1"/>
</dbReference>
<dbReference type="Gene3D" id="3.40.50.1240">
    <property type="entry name" value="Phosphoglycerate mutase-like"/>
    <property type="match status" value="1"/>
</dbReference>
<dbReference type="HAMAP" id="MF_01039">
    <property type="entry name" value="PGAM_GpmA"/>
    <property type="match status" value="1"/>
</dbReference>
<dbReference type="InterPro" id="IPR013078">
    <property type="entry name" value="His_Pase_superF_clade-1"/>
</dbReference>
<dbReference type="InterPro" id="IPR029033">
    <property type="entry name" value="His_PPase_superfam"/>
</dbReference>
<dbReference type="InterPro" id="IPR001345">
    <property type="entry name" value="PG/BPGM_mutase_AS"/>
</dbReference>
<dbReference type="InterPro" id="IPR005952">
    <property type="entry name" value="Phosphogly_mut1"/>
</dbReference>
<dbReference type="NCBIfam" id="TIGR01258">
    <property type="entry name" value="pgm_1"/>
    <property type="match status" value="1"/>
</dbReference>
<dbReference type="NCBIfam" id="NF010713">
    <property type="entry name" value="PRK14115.1"/>
    <property type="match status" value="1"/>
</dbReference>
<dbReference type="NCBIfam" id="NF010718">
    <property type="entry name" value="PRK14120.1"/>
    <property type="match status" value="1"/>
</dbReference>
<dbReference type="PANTHER" id="PTHR11931">
    <property type="entry name" value="PHOSPHOGLYCERATE MUTASE"/>
    <property type="match status" value="1"/>
</dbReference>
<dbReference type="Pfam" id="PF00300">
    <property type="entry name" value="His_Phos_1"/>
    <property type="match status" value="2"/>
</dbReference>
<dbReference type="PIRSF" id="PIRSF000709">
    <property type="entry name" value="6PFK_2-Ptase"/>
    <property type="match status" value="1"/>
</dbReference>
<dbReference type="SMART" id="SM00855">
    <property type="entry name" value="PGAM"/>
    <property type="match status" value="1"/>
</dbReference>
<dbReference type="SUPFAM" id="SSF53254">
    <property type="entry name" value="Phosphoglycerate mutase-like"/>
    <property type="match status" value="1"/>
</dbReference>
<dbReference type="PROSITE" id="PS00175">
    <property type="entry name" value="PG_MUTASE"/>
    <property type="match status" value="1"/>
</dbReference>
<feature type="chain" id="PRO_1000064080" description="2,3-bisphosphoglycerate-dependent phosphoglycerate mutase">
    <location>
        <begin position="1"/>
        <end position="251"/>
    </location>
</feature>
<feature type="active site" description="Tele-phosphohistidine intermediate" evidence="1">
    <location>
        <position position="12"/>
    </location>
</feature>
<feature type="active site" description="Proton donor/acceptor" evidence="1">
    <location>
        <position position="90"/>
    </location>
</feature>
<feature type="binding site" evidence="1">
    <location>
        <begin position="11"/>
        <end position="18"/>
    </location>
    <ligand>
        <name>substrate</name>
    </ligand>
</feature>
<feature type="binding site" evidence="1">
    <location>
        <begin position="24"/>
        <end position="25"/>
    </location>
    <ligand>
        <name>substrate</name>
    </ligand>
</feature>
<feature type="binding site" evidence="1">
    <location>
        <position position="63"/>
    </location>
    <ligand>
        <name>substrate</name>
    </ligand>
</feature>
<feature type="binding site" evidence="1">
    <location>
        <begin position="90"/>
        <end position="93"/>
    </location>
    <ligand>
        <name>substrate</name>
    </ligand>
</feature>
<feature type="binding site" evidence="1">
    <location>
        <position position="101"/>
    </location>
    <ligand>
        <name>substrate</name>
    </ligand>
</feature>
<feature type="binding site" evidence="1">
    <location>
        <begin position="117"/>
        <end position="118"/>
    </location>
    <ligand>
        <name>substrate</name>
    </ligand>
</feature>
<feature type="binding site" evidence="1">
    <location>
        <begin position="184"/>
        <end position="185"/>
    </location>
    <ligand>
        <name>substrate</name>
    </ligand>
</feature>
<feature type="site" description="Transition state stabilizer" evidence="1">
    <location>
        <position position="183"/>
    </location>
</feature>
<keyword id="KW-0312">Gluconeogenesis</keyword>
<keyword id="KW-0324">Glycolysis</keyword>
<keyword id="KW-0413">Isomerase</keyword>